<organism>
    <name type="scientific">Danio rerio</name>
    <name type="common">Zebrafish</name>
    <name type="synonym">Brachydanio rerio</name>
    <dbReference type="NCBI Taxonomy" id="7955"/>
    <lineage>
        <taxon>Eukaryota</taxon>
        <taxon>Metazoa</taxon>
        <taxon>Chordata</taxon>
        <taxon>Craniata</taxon>
        <taxon>Vertebrata</taxon>
        <taxon>Euteleostomi</taxon>
        <taxon>Actinopterygii</taxon>
        <taxon>Neopterygii</taxon>
        <taxon>Teleostei</taxon>
        <taxon>Ostariophysi</taxon>
        <taxon>Cypriniformes</taxon>
        <taxon>Danionidae</taxon>
        <taxon>Danioninae</taxon>
        <taxon>Danio</taxon>
    </lineage>
</organism>
<dbReference type="EMBL" id="BC077093">
    <property type="protein sequence ID" value="AAH77093.1"/>
    <property type="molecule type" value="mRNA"/>
</dbReference>
<dbReference type="RefSeq" id="NP_001003580.1">
    <property type="nucleotide sequence ID" value="NM_001003580.2"/>
</dbReference>
<dbReference type="SMR" id="Q6DEL7"/>
<dbReference type="FunCoup" id="Q6DEL7">
    <property type="interactions" value="951"/>
</dbReference>
<dbReference type="STRING" id="7955.ENSDARP00000025618"/>
<dbReference type="PaxDb" id="7955-ENSDARP00000025618"/>
<dbReference type="GeneID" id="445186"/>
<dbReference type="KEGG" id="dre:445186"/>
<dbReference type="AGR" id="ZFIN:ZDB-GENE-040801-99"/>
<dbReference type="CTD" id="80311"/>
<dbReference type="ZFIN" id="ZDB-GENE-040801-99">
    <property type="gene designation" value="klhl15"/>
</dbReference>
<dbReference type="eggNOG" id="KOG4441">
    <property type="taxonomic scope" value="Eukaryota"/>
</dbReference>
<dbReference type="InParanoid" id="Q6DEL7"/>
<dbReference type="OrthoDB" id="45365at2759"/>
<dbReference type="PhylomeDB" id="Q6DEL7"/>
<dbReference type="UniPathway" id="UPA00143"/>
<dbReference type="PRO" id="PR:Q6DEL7"/>
<dbReference type="Proteomes" id="UP000000437">
    <property type="component" value="Chromosome 24"/>
</dbReference>
<dbReference type="GO" id="GO:0031463">
    <property type="term" value="C:Cul3-RING ubiquitin ligase complex"/>
    <property type="evidence" value="ECO:0007669"/>
    <property type="project" value="InterPro"/>
</dbReference>
<dbReference type="GO" id="GO:0005634">
    <property type="term" value="C:nucleus"/>
    <property type="evidence" value="ECO:0000318"/>
    <property type="project" value="GO_Central"/>
</dbReference>
<dbReference type="GO" id="GO:1990756">
    <property type="term" value="F:ubiquitin-like ligase-substrate adaptor activity"/>
    <property type="evidence" value="ECO:0000250"/>
    <property type="project" value="UniProtKB"/>
</dbReference>
<dbReference type="GO" id="GO:2000042">
    <property type="term" value="P:negative regulation of double-strand break repair via homologous recombination"/>
    <property type="evidence" value="ECO:0000250"/>
    <property type="project" value="UniProtKB"/>
</dbReference>
<dbReference type="GO" id="GO:0071630">
    <property type="term" value="P:nuclear protein quality control by the ubiquitin-proteasome system"/>
    <property type="evidence" value="ECO:0000318"/>
    <property type="project" value="GO_Central"/>
</dbReference>
<dbReference type="GO" id="GO:0016567">
    <property type="term" value="P:protein ubiquitination"/>
    <property type="evidence" value="ECO:0007669"/>
    <property type="project" value="UniProtKB-UniPathway"/>
</dbReference>
<dbReference type="CDD" id="cd18454">
    <property type="entry name" value="BACK_KLHL15"/>
    <property type="match status" value="1"/>
</dbReference>
<dbReference type="CDD" id="cd18244">
    <property type="entry name" value="BTB_POZ_KLHL15"/>
    <property type="match status" value="1"/>
</dbReference>
<dbReference type="FunFam" id="2.120.10.80:FF:000014">
    <property type="entry name" value="Kelch-like protein 15"/>
    <property type="match status" value="1"/>
</dbReference>
<dbReference type="Gene3D" id="1.25.40.420">
    <property type="match status" value="1"/>
</dbReference>
<dbReference type="Gene3D" id="2.120.10.80">
    <property type="entry name" value="Kelch-type beta propeller"/>
    <property type="match status" value="1"/>
</dbReference>
<dbReference type="Gene3D" id="3.30.710.10">
    <property type="entry name" value="Potassium Channel Kv1.1, Chain A"/>
    <property type="match status" value="1"/>
</dbReference>
<dbReference type="InterPro" id="IPR011705">
    <property type="entry name" value="BACK"/>
</dbReference>
<dbReference type="InterPro" id="IPR017096">
    <property type="entry name" value="BTB-kelch_protein"/>
</dbReference>
<dbReference type="InterPro" id="IPR000210">
    <property type="entry name" value="BTB/POZ_dom"/>
</dbReference>
<dbReference type="InterPro" id="IPR030597">
    <property type="entry name" value="BTB_POZ_KLHL15"/>
</dbReference>
<dbReference type="InterPro" id="IPR015915">
    <property type="entry name" value="Kelch-typ_b-propeller"/>
</dbReference>
<dbReference type="InterPro" id="IPR006652">
    <property type="entry name" value="Kelch_1"/>
</dbReference>
<dbReference type="InterPro" id="IPR047030">
    <property type="entry name" value="KLHL15_BACK"/>
</dbReference>
<dbReference type="InterPro" id="IPR011333">
    <property type="entry name" value="SKP1/BTB/POZ_sf"/>
</dbReference>
<dbReference type="PANTHER" id="PTHR45632:SF12">
    <property type="entry name" value="KELCH-LIKE PROTEIN 15"/>
    <property type="match status" value="1"/>
</dbReference>
<dbReference type="PANTHER" id="PTHR45632">
    <property type="entry name" value="LD33804P"/>
    <property type="match status" value="1"/>
</dbReference>
<dbReference type="Pfam" id="PF07707">
    <property type="entry name" value="BACK"/>
    <property type="match status" value="1"/>
</dbReference>
<dbReference type="Pfam" id="PF00651">
    <property type="entry name" value="BTB"/>
    <property type="match status" value="1"/>
</dbReference>
<dbReference type="Pfam" id="PF01344">
    <property type="entry name" value="Kelch_1"/>
    <property type="match status" value="3"/>
</dbReference>
<dbReference type="PIRSF" id="PIRSF037037">
    <property type="entry name" value="Kelch-like_protein_gigaxonin"/>
    <property type="match status" value="1"/>
</dbReference>
<dbReference type="SMART" id="SM00875">
    <property type="entry name" value="BACK"/>
    <property type="match status" value="1"/>
</dbReference>
<dbReference type="SMART" id="SM00225">
    <property type="entry name" value="BTB"/>
    <property type="match status" value="1"/>
</dbReference>
<dbReference type="SMART" id="SM00612">
    <property type="entry name" value="Kelch"/>
    <property type="match status" value="5"/>
</dbReference>
<dbReference type="SUPFAM" id="SSF117281">
    <property type="entry name" value="Kelch motif"/>
    <property type="match status" value="1"/>
</dbReference>
<dbReference type="SUPFAM" id="SSF54695">
    <property type="entry name" value="POZ domain"/>
    <property type="match status" value="1"/>
</dbReference>
<dbReference type="PROSITE" id="PS50097">
    <property type="entry name" value="BTB"/>
    <property type="match status" value="1"/>
</dbReference>
<gene>
    <name type="primary">klhl15</name>
    <name type="ORF">zgc:101051</name>
</gene>
<protein>
    <recommendedName>
        <fullName>Kelch-like protein 15</fullName>
    </recommendedName>
</protein>
<proteinExistence type="evidence at transcript level"/>
<reference key="1">
    <citation type="submission" date="2004-07" db="EMBL/GenBank/DDBJ databases">
        <authorList>
            <consortium name="NIH - Zebrafish Gene Collection (ZGC) project"/>
        </authorList>
    </citation>
    <scope>NUCLEOTIDE SEQUENCE [LARGE SCALE MRNA]</scope>
    <source>
        <tissue>Embryo</tissue>
    </source>
</reference>
<feature type="chain" id="PRO_0000223951" description="Kelch-like protein 15">
    <location>
        <begin position="1"/>
        <end position="604"/>
    </location>
</feature>
<feature type="domain" description="BTB" evidence="2">
    <location>
        <begin position="31"/>
        <end position="98"/>
    </location>
</feature>
<feature type="domain" description="BACK">
    <location>
        <begin position="133"/>
        <end position="237"/>
    </location>
</feature>
<feature type="repeat" description="Kelch 1">
    <location>
        <begin position="328"/>
        <end position="379"/>
    </location>
</feature>
<feature type="repeat" description="Kelch 2">
    <location>
        <begin position="381"/>
        <end position="426"/>
    </location>
</feature>
<feature type="repeat" description="Kelch 3">
    <location>
        <begin position="428"/>
        <end position="473"/>
    </location>
</feature>
<feature type="repeat" description="Kelch 4">
    <location>
        <begin position="489"/>
        <end position="542"/>
    </location>
</feature>
<feature type="repeat" description="Kelch 5">
    <location>
        <begin position="544"/>
        <end position="592"/>
    </location>
</feature>
<keyword id="KW-0880">Kelch repeat</keyword>
<keyword id="KW-0539">Nucleus</keyword>
<keyword id="KW-1185">Reference proteome</keyword>
<keyword id="KW-0677">Repeat</keyword>
<keyword id="KW-0833">Ubl conjugation pathway</keyword>
<comment type="function">
    <text evidence="1">Substrate-specific adapter for an E3 ubiquitin-protein ligase complex.</text>
</comment>
<comment type="pathway">
    <text>Protein modification; protein ubiquitination.</text>
</comment>
<comment type="subcellular location">
    <subcellularLocation>
        <location evidence="1">Nucleus</location>
    </subcellularLocation>
</comment>
<sequence length="604" mass="69506">MSGDVEVYLSQVHDGSVSSGFRALYEERLLLDVTLLIEEHHFQAHKALLATQSDYFRVMFTADMRERDQDKIHMKGLTAAGFGHVLRFMYYGSLELSMLTVQEILQAAMYVQLTEAVEFCCSFLLAKICLENCAEVMRLLEDFSVGVEGVQEQLDAFLLENFVPLMARPDFLSYLSLEKLMAYLDSDQLSRYPEIELYEAVQAWLRHDRRRWRHTDAVVQNLRFCLMTPANIFEKVKTSEFYRYSRQLRLEVDQALSYFHQVNEQPLAETKSNRIRSVRPQTAVFRGMIGHSMVNSKILLLHRPKVWWELEGPQVPLRPDCLAIVNNFAFLLGGEELGPDGEFHASSKVYRYDPRQNSWLRMADMSVPRSEFAVGVIGKYIYAVAGRTRDETFYSTERYDIVEDKWEFVDPYPVNKYGHEGTVLNGKLYITGGITSSSTSKQVCVFDPGREGSSEHRTRRTPILTNCWENKSKMNYARCFHKMISHNGKLYVFGGVCVILRASFESQGCPSTEVYDPETDEWTILASMPIGRSGHGVAVLDKQIMVLGGLCYNGHYSDSILTFDPEENKWKEDEYPRMPCKLDGLQVCSLHFPEYVLEHVRRCS</sequence>
<name>KLH15_DANRE</name>
<evidence type="ECO:0000250" key="1">
    <source>
        <dbReference type="UniProtKB" id="Q96M94"/>
    </source>
</evidence>
<evidence type="ECO:0000255" key="2">
    <source>
        <dbReference type="PROSITE-ProRule" id="PRU00037"/>
    </source>
</evidence>
<accession>Q6DEL7</accession>